<accession>Q3MHQ7</accession>
<reference key="1">
    <citation type="submission" date="2005-09" db="EMBL/GenBank/DDBJ databases">
        <authorList>
            <consortium name="NIH - Mammalian Gene Collection (MGC) project"/>
        </authorList>
    </citation>
    <scope>NUCLEOTIDE SEQUENCE [LARGE SCALE MRNA]</scope>
    <source>
        <strain>Crossbred X Angus</strain>
        <tissue>Ileum</tissue>
    </source>
</reference>
<sequence length="240" mass="26427">MVSPVTVVKSEGPKLVPFFKATCVYFVLWLPSSSPSWVSALIKCLPIFCLWLFLLAHGLGFLLTHPSATRIFVGLVFSAIGDAFLIWQDQGYFVHGMLMFAVTHMLYASAFGMRPLGLRTGLLMVILSGLCYAFLYPNLTGAFTYVVGVYVAIIGFMGWRAMAGLQLVGAAWRWTELAAGTGALLFIVSDLTIALDKFCFPVPYSRALIMSTYYAAQMLIALSAVESREPVEDYRLSKAK</sequence>
<name>TM86A_BOVIN</name>
<comment type="function">
    <text evidence="1">Catalyzes the hydrolysis of the vinyl ether bond of choline or ethanolamine lysoplasmalogens, forming fatty aldehyde and glycerophosphocholine or glycerophosphoethanolamine, respectively and is specific for the sn-2-deacylated (lyso) form of plasmalogen (By similarity). Plays an important role in lysoplasmalogen metabolism in the adipocyte tissue and macrophages (By similarity).</text>
</comment>
<comment type="catalytic activity">
    <reaction evidence="1">
        <text>a 1-O-(1Z-alkenyl)-sn-glycero-3-phosphocholine + H2O = a 2,3-saturated aldehyde + sn-glycerol 3-phosphocholine</text>
        <dbReference type="Rhea" id="RHEA:22544"/>
        <dbReference type="ChEBI" id="CHEBI:15377"/>
        <dbReference type="ChEBI" id="CHEBI:16870"/>
        <dbReference type="ChEBI" id="CHEBI:73359"/>
        <dbReference type="ChEBI" id="CHEBI:77287"/>
        <dbReference type="EC" id="3.3.2.2"/>
    </reaction>
</comment>
<comment type="catalytic activity">
    <reaction evidence="1">
        <text>a 1-O-(1Z-alkenyl)-sn-glycero-3-phosphoethanolamine + H2O = a 2,3-saturated aldehyde + sn-glycero-3-phosphoethanolamine</text>
        <dbReference type="Rhea" id="RHEA:16905"/>
        <dbReference type="ChEBI" id="CHEBI:15377"/>
        <dbReference type="ChEBI" id="CHEBI:73359"/>
        <dbReference type="ChEBI" id="CHEBI:77288"/>
        <dbReference type="ChEBI" id="CHEBI:143890"/>
        <dbReference type="EC" id="3.3.2.2"/>
    </reaction>
</comment>
<comment type="subcellular location">
    <subcellularLocation>
        <location evidence="2">Endoplasmic reticulum membrane</location>
        <topology evidence="3">Multi-pass membrane protein</topology>
    </subcellularLocation>
</comment>
<comment type="similarity">
    <text evidence="4">Belongs to the TMEM86 family.</text>
</comment>
<evidence type="ECO:0000250" key="1">
    <source>
        <dbReference type="UniProtKB" id="Q8N2M4"/>
    </source>
</evidence>
<evidence type="ECO:0000250" key="2">
    <source>
        <dbReference type="UniProtKB" id="Q9D8N3"/>
    </source>
</evidence>
<evidence type="ECO:0000255" key="3"/>
<evidence type="ECO:0000305" key="4"/>
<organism>
    <name type="scientific">Bos taurus</name>
    <name type="common">Bovine</name>
    <dbReference type="NCBI Taxonomy" id="9913"/>
    <lineage>
        <taxon>Eukaryota</taxon>
        <taxon>Metazoa</taxon>
        <taxon>Chordata</taxon>
        <taxon>Craniata</taxon>
        <taxon>Vertebrata</taxon>
        <taxon>Euteleostomi</taxon>
        <taxon>Mammalia</taxon>
        <taxon>Eutheria</taxon>
        <taxon>Laurasiatheria</taxon>
        <taxon>Artiodactyla</taxon>
        <taxon>Ruminantia</taxon>
        <taxon>Pecora</taxon>
        <taxon>Bovidae</taxon>
        <taxon>Bovinae</taxon>
        <taxon>Bos</taxon>
    </lineage>
</organism>
<protein>
    <recommendedName>
        <fullName>Lysoplasmalogenase TMEM86A</fullName>
        <ecNumber evidence="1">3.3.2.2</ecNumber>
    </recommendedName>
    <alternativeName>
        <fullName>Transmembrane protein 86A</fullName>
    </alternativeName>
</protein>
<keyword id="KW-0256">Endoplasmic reticulum</keyword>
<keyword id="KW-0378">Hydrolase</keyword>
<keyword id="KW-0443">Lipid metabolism</keyword>
<keyword id="KW-0472">Membrane</keyword>
<keyword id="KW-1185">Reference proteome</keyword>
<keyword id="KW-0812">Transmembrane</keyword>
<keyword id="KW-1133">Transmembrane helix</keyword>
<gene>
    <name type="primary">TMEM86A</name>
</gene>
<proteinExistence type="evidence at transcript level"/>
<feature type="chain" id="PRO_0000201837" description="Lysoplasmalogenase TMEM86A">
    <location>
        <begin position="1"/>
        <end position="240"/>
    </location>
</feature>
<feature type="topological domain" description="Cytoplasmic" evidence="4">
    <location>
        <begin position="1"/>
        <end position="21"/>
    </location>
</feature>
<feature type="transmembrane region" description="Helical" evidence="3">
    <location>
        <begin position="22"/>
        <end position="42"/>
    </location>
</feature>
<feature type="topological domain" description="Extracellular" evidence="4">
    <location>
        <position position="43"/>
    </location>
</feature>
<feature type="transmembrane region" description="Helical" evidence="3">
    <location>
        <begin position="44"/>
        <end position="64"/>
    </location>
</feature>
<feature type="topological domain" description="Cytoplasmic" evidence="4">
    <location>
        <begin position="65"/>
        <end position="70"/>
    </location>
</feature>
<feature type="transmembrane region" description="Helical" evidence="3">
    <location>
        <begin position="71"/>
        <end position="91"/>
    </location>
</feature>
<feature type="topological domain" description="Extracellular" evidence="4">
    <location>
        <position position="92"/>
    </location>
</feature>
<feature type="transmembrane region" description="Helical" evidence="3">
    <location>
        <begin position="93"/>
        <end position="113"/>
    </location>
</feature>
<feature type="topological domain" description="Cytoplasmic" evidence="4">
    <location>
        <begin position="114"/>
        <end position="115"/>
    </location>
</feature>
<feature type="transmembrane region" description="Helical" evidence="3">
    <location>
        <begin position="116"/>
        <end position="136"/>
    </location>
</feature>
<feature type="topological domain" description="Extracellular" evidence="4">
    <location>
        <begin position="137"/>
        <end position="138"/>
    </location>
</feature>
<feature type="transmembrane region" description="Helical" evidence="3">
    <location>
        <begin position="139"/>
        <end position="159"/>
    </location>
</feature>
<feature type="topological domain" description="Cytoplasmic" evidence="4">
    <location>
        <begin position="160"/>
        <end position="174"/>
    </location>
</feature>
<feature type="transmembrane region" description="Helical" evidence="3">
    <location>
        <begin position="175"/>
        <end position="195"/>
    </location>
</feature>
<feature type="topological domain" description="Extracellular" evidence="4">
    <location>
        <begin position="196"/>
        <end position="206"/>
    </location>
</feature>
<feature type="transmembrane region" description="Helical" evidence="3">
    <location>
        <begin position="207"/>
        <end position="227"/>
    </location>
</feature>
<feature type="topological domain" description="Cytoplasmic" evidence="4">
    <location>
        <begin position="228"/>
        <end position="240"/>
    </location>
</feature>
<dbReference type="EC" id="3.3.2.2" evidence="1"/>
<dbReference type="EMBL" id="BC105146">
    <property type="protein sequence ID" value="AAI05147.1"/>
    <property type="molecule type" value="mRNA"/>
</dbReference>
<dbReference type="RefSeq" id="NP_001030465.1">
    <property type="nucleotide sequence ID" value="NM_001035388.1"/>
</dbReference>
<dbReference type="FunCoup" id="Q3MHQ7">
    <property type="interactions" value="55"/>
</dbReference>
<dbReference type="STRING" id="9913.ENSBTAP00000072497"/>
<dbReference type="PaxDb" id="9913-ENSBTAP00000055823"/>
<dbReference type="GeneID" id="532018"/>
<dbReference type="KEGG" id="bta:532018"/>
<dbReference type="CTD" id="144110"/>
<dbReference type="eggNOG" id="KOG4804">
    <property type="taxonomic scope" value="Eukaryota"/>
</dbReference>
<dbReference type="InParanoid" id="Q3MHQ7"/>
<dbReference type="OrthoDB" id="2133758at2759"/>
<dbReference type="Proteomes" id="UP000009136">
    <property type="component" value="Unplaced"/>
</dbReference>
<dbReference type="GO" id="GO:0005789">
    <property type="term" value="C:endoplasmic reticulum membrane"/>
    <property type="evidence" value="ECO:0000250"/>
    <property type="project" value="UniProtKB"/>
</dbReference>
<dbReference type="GO" id="GO:0016020">
    <property type="term" value="C:membrane"/>
    <property type="evidence" value="ECO:0000318"/>
    <property type="project" value="GO_Central"/>
</dbReference>
<dbReference type="GO" id="GO:0047408">
    <property type="term" value="F:alkenylglycerophosphocholine hydrolase activity"/>
    <property type="evidence" value="ECO:0000250"/>
    <property type="project" value="UniProtKB"/>
</dbReference>
<dbReference type="GO" id="GO:0016787">
    <property type="term" value="F:hydrolase activity"/>
    <property type="evidence" value="ECO:0000318"/>
    <property type="project" value="GO_Central"/>
</dbReference>
<dbReference type="GO" id="GO:0006629">
    <property type="term" value="P:lipid metabolic process"/>
    <property type="evidence" value="ECO:0007669"/>
    <property type="project" value="UniProtKB-KW"/>
</dbReference>
<dbReference type="InterPro" id="IPR012506">
    <property type="entry name" value="TMEM86B-like"/>
</dbReference>
<dbReference type="PANTHER" id="PTHR31885">
    <property type="entry name" value="GH04784P"/>
    <property type="match status" value="1"/>
</dbReference>
<dbReference type="PANTHER" id="PTHR31885:SF9">
    <property type="entry name" value="LYSOPLASMALOGENASE-LIKE PROTEIN TMEM86A"/>
    <property type="match status" value="1"/>
</dbReference>
<dbReference type="Pfam" id="PF07947">
    <property type="entry name" value="YhhN"/>
    <property type="match status" value="1"/>
</dbReference>